<accession>A3AYR1</accession>
<accession>Q7XPW9</accession>
<reference key="1">
    <citation type="journal article" date="2002" name="Nature">
        <title>Sequence and analysis of rice chromosome 4.</title>
        <authorList>
            <person name="Feng Q."/>
            <person name="Zhang Y."/>
            <person name="Hao P."/>
            <person name="Wang S."/>
            <person name="Fu G."/>
            <person name="Huang Y."/>
            <person name="Li Y."/>
            <person name="Zhu J."/>
            <person name="Liu Y."/>
            <person name="Hu X."/>
            <person name="Jia P."/>
            <person name="Zhang Y."/>
            <person name="Zhao Q."/>
            <person name="Ying K."/>
            <person name="Yu S."/>
            <person name="Tang Y."/>
            <person name="Weng Q."/>
            <person name="Zhang L."/>
            <person name="Lu Y."/>
            <person name="Mu J."/>
            <person name="Lu Y."/>
            <person name="Zhang L.S."/>
            <person name="Yu Z."/>
            <person name="Fan D."/>
            <person name="Liu X."/>
            <person name="Lu T."/>
            <person name="Li C."/>
            <person name="Wu Y."/>
            <person name="Sun T."/>
            <person name="Lei H."/>
            <person name="Li T."/>
            <person name="Hu H."/>
            <person name="Guan J."/>
            <person name="Wu M."/>
            <person name="Zhang R."/>
            <person name="Zhou B."/>
            <person name="Chen Z."/>
            <person name="Chen L."/>
            <person name="Jin Z."/>
            <person name="Wang R."/>
            <person name="Yin H."/>
            <person name="Cai Z."/>
            <person name="Ren S."/>
            <person name="Lv G."/>
            <person name="Gu W."/>
            <person name="Zhu G."/>
            <person name="Tu Y."/>
            <person name="Jia J."/>
            <person name="Zhang Y."/>
            <person name="Chen J."/>
            <person name="Kang H."/>
            <person name="Chen X."/>
            <person name="Shao C."/>
            <person name="Sun Y."/>
            <person name="Hu Q."/>
            <person name="Zhang X."/>
            <person name="Zhang W."/>
            <person name="Wang L."/>
            <person name="Ding C."/>
            <person name="Sheng H."/>
            <person name="Gu J."/>
            <person name="Chen S."/>
            <person name="Ni L."/>
            <person name="Zhu F."/>
            <person name="Chen W."/>
            <person name="Lan L."/>
            <person name="Lai Y."/>
            <person name="Cheng Z."/>
            <person name="Gu M."/>
            <person name="Jiang J."/>
            <person name="Li J."/>
            <person name="Hong G."/>
            <person name="Xue Y."/>
            <person name="Han B."/>
        </authorList>
    </citation>
    <scope>NUCLEOTIDE SEQUENCE [LARGE SCALE GENOMIC DNA]</scope>
    <source>
        <strain>cv. Nipponbare</strain>
    </source>
</reference>
<reference key="2">
    <citation type="journal article" date="2005" name="Nature">
        <title>The map-based sequence of the rice genome.</title>
        <authorList>
            <consortium name="International rice genome sequencing project (IRGSP)"/>
        </authorList>
    </citation>
    <scope>NUCLEOTIDE SEQUENCE [LARGE SCALE GENOMIC DNA]</scope>
    <source>
        <strain>cv. Nipponbare</strain>
    </source>
</reference>
<reference key="3">
    <citation type="journal article" date="2008" name="Nucleic Acids Res.">
        <title>The rice annotation project database (RAP-DB): 2008 update.</title>
        <authorList>
            <consortium name="The rice annotation project (RAP)"/>
        </authorList>
    </citation>
    <scope>GENOME REANNOTATION</scope>
    <source>
        <strain>cv. Nipponbare</strain>
    </source>
</reference>
<reference key="4">
    <citation type="journal article" date="2013" name="Rice">
        <title>Improvement of the Oryza sativa Nipponbare reference genome using next generation sequence and optical map data.</title>
        <authorList>
            <person name="Kawahara Y."/>
            <person name="de la Bastide M."/>
            <person name="Hamilton J.P."/>
            <person name="Kanamori H."/>
            <person name="McCombie W.R."/>
            <person name="Ouyang S."/>
            <person name="Schwartz D.C."/>
            <person name="Tanaka T."/>
            <person name="Wu J."/>
            <person name="Zhou S."/>
            <person name="Childs K.L."/>
            <person name="Davidson R.M."/>
            <person name="Lin H."/>
            <person name="Quesada-Ocampo L."/>
            <person name="Vaillancourt B."/>
            <person name="Sakai H."/>
            <person name="Lee S.S."/>
            <person name="Kim J."/>
            <person name="Numa H."/>
            <person name="Itoh T."/>
            <person name="Buell C.R."/>
            <person name="Matsumoto T."/>
        </authorList>
    </citation>
    <scope>GENOME REANNOTATION</scope>
    <source>
        <strain>cv. Nipponbare</strain>
    </source>
</reference>
<reference key="5">
    <citation type="journal article" date="2005" name="PLoS Biol.">
        <title>The genomes of Oryza sativa: a history of duplications.</title>
        <authorList>
            <person name="Yu J."/>
            <person name="Wang J."/>
            <person name="Lin W."/>
            <person name="Li S."/>
            <person name="Li H."/>
            <person name="Zhou J."/>
            <person name="Ni P."/>
            <person name="Dong W."/>
            <person name="Hu S."/>
            <person name="Zeng C."/>
            <person name="Zhang J."/>
            <person name="Zhang Y."/>
            <person name="Li R."/>
            <person name="Xu Z."/>
            <person name="Li S."/>
            <person name="Li X."/>
            <person name="Zheng H."/>
            <person name="Cong L."/>
            <person name="Lin L."/>
            <person name="Yin J."/>
            <person name="Geng J."/>
            <person name="Li G."/>
            <person name="Shi J."/>
            <person name="Liu J."/>
            <person name="Lv H."/>
            <person name="Li J."/>
            <person name="Wang J."/>
            <person name="Deng Y."/>
            <person name="Ran L."/>
            <person name="Shi X."/>
            <person name="Wang X."/>
            <person name="Wu Q."/>
            <person name="Li C."/>
            <person name="Ren X."/>
            <person name="Wang J."/>
            <person name="Wang X."/>
            <person name="Li D."/>
            <person name="Liu D."/>
            <person name="Zhang X."/>
            <person name="Ji Z."/>
            <person name="Zhao W."/>
            <person name="Sun Y."/>
            <person name="Zhang Z."/>
            <person name="Bao J."/>
            <person name="Han Y."/>
            <person name="Dong L."/>
            <person name="Ji J."/>
            <person name="Chen P."/>
            <person name="Wu S."/>
            <person name="Liu J."/>
            <person name="Xiao Y."/>
            <person name="Bu D."/>
            <person name="Tan J."/>
            <person name="Yang L."/>
            <person name="Ye C."/>
            <person name="Zhang J."/>
            <person name="Xu J."/>
            <person name="Zhou Y."/>
            <person name="Yu Y."/>
            <person name="Zhang B."/>
            <person name="Zhuang S."/>
            <person name="Wei H."/>
            <person name="Liu B."/>
            <person name="Lei M."/>
            <person name="Yu H."/>
            <person name="Li Y."/>
            <person name="Xu H."/>
            <person name="Wei S."/>
            <person name="He X."/>
            <person name="Fang L."/>
            <person name="Zhang Z."/>
            <person name="Zhang Y."/>
            <person name="Huang X."/>
            <person name="Su Z."/>
            <person name="Tong W."/>
            <person name="Li J."/>
            <person name="Tong Z."/>
            <person name="Li S."/>
            <person name="Ye J."/>
            <person name="Wang L."/>
            <person name="Fang L."/>
            <person name="Lei T."/>
            <person name="Chen C.-S."/>
            <person name="Chen H.-C."/>
            <person name="Xu Z."/>
            <person name="Li H."/>
            <person name="Huang H."/>
            <person name="Zhang F."/>
            <person name="Xu H."/>
            <person name="Li N."/>
            <person name="Zhao C."/>
            <person name="Li S."/>
            <person name="Dong L."/>
            <person name="Huang Y."/>
            <person name="Li L."/>
            <person name="Xi Y."/>
            <person name="Qi Q."/>
            <person name="Li W."/>
            <person name="Zhang B."/>
            <person name="Hu W."/>
            <person name="Zhang Y."/>
            <person name="Tian X."/>
            <person name="Jiao Y."/>
            <person name="Liang X."/>
            <person name="Jin J."/>
            <person name="Gao L."/>
            <person name="Zheng W."/>
            <person name="Hao B."/>
            <person name="Liu S.-M."/>
            <person name="Wang W."/>
            <person name="Yuan L."/>
            <person name="Cao M."/>
            <person name="McDermott J."/>
            <person name="Samudrala R."/>
            <person name="Wang J."/>
            <person name="Wong G.K.-S."/>
            <person name="Yang H."/>
        </authorList>
    </citation>
    <scope>NUCLEOTIDE SEQUENCE [LARGE SCALE GENOMIC DNA]</scope>
    <source>
        <strain>cv. Nipponbare</strain>
    </source>
</reference>
<reference key="6">
    <citation type="journal article" date="2011" name="New Phytol.">
        <title>The rice acyl-CoA-binding protein gene family: phylogeny, expression and functional analysis.</title>
        <authorList>
            <person name="Meng W."/>
            <person name="Su Y.C."/>
            <person name="Saunders R.M."/>
            <person name="Chye M.L."/>
        </authorList>
    </citation>
    <scope>FUNCTION</scope>
    <scope>TISSUE SPECIFICITY</scope>
    <scope>INDUCTION</scope>
    <scope>GENE FAMILY</scope>
    <scope>NOMENCLATURE</scope>
</reference>
<reference key="7">
    <citation type="journal article" date="2014" name="New Phytol.">
        <title>Subcellular localization of rice acyl-CoA-binding proteins (ACBPs) indicates that OsACBP6::GFP is targeted to the peroxisomes.</title>
        <authorList>
            <person name="Meng W."/>
            <person name="Hsiao A.S."/>
            <person name="Gao C."/>
            <person name="Jiang L."/>
            <person name="Chye M.L."/>
        </authorList>
    </citation>
    <scope>FUNCTION</scope>
    <scope>SUBCELLULAR LOCATION</scope>
</reference>
<evidence type="ECO:0000250" key="1">
    <source>
        <dbReference type="UniProtKB" id="P07107"/>
    </source>
</evidence>
<evidence type="ECO:0000255" key="2"/>
<evidence type="ECO:0000255" key="3">
    <source>
        <dbReference type="PROSITE-ProRule" id="PRU00498"/>
    </source>
</evidence>
<evidence type="ECO:0000255" key="4">
    <source>
        <dbReference type="PROSITE-ProRule" id="PRU00573"/>
    </source>
</evidence>
<evidence type="ECO:0000256" key="5">
    <source>
        <dbReference type="SAM" id="MobiDB-lite"/>
    </source>
</evidence>
<evidence type="ECO:0000269" key="6">
    <source>
    </source>
</evidence>
<evidence type="ECO:0000269" key="7">
    <source>
    </source>
</evidence>
<evidence type="ECO:0000303" key="8">
    <source>
    </source>
</evidence>
<evidence type="ECO:0000305" key="9"/>
<evidence type="ECO:0000305" key="10">
    <source>
    </source>
</evidence>
<evidence type="ECO:0000312" key="11">
    <source>
        <dbReference type="EMBL" id="BAS91681.1"/>
    </source>
</evidence>
<evidence type="ECO:0000312" key="12">
    <source>
        <dbReference type="EMBL" id="CAE03429.1"/>
    </source>
</evidence>
<evidence type="ECO:0000312" key="13">
    <source>
        <dbReference type="EMBL" id="EAZ32450.1"/>
    </source>
</evidence>
<name>ACBP4_ORYSJ</name>
<keyword id="KW-0040">ANK repeat</keyword>
<keyword id="KW-0256">Endoplasmic reticulum</keyword>
<keyword id="KW-0325">Glycoprotein</keyword>
<keyword id="KW-0446">Lipid-binding</keyword>
<keyword id="KW-0472">Membrane</keyword>
<keyword id="KW-1185">Reference proteome</keyword>
<keyword id="KW-0677">Repeat</keyword>
<keyword id="KW-0812">Transmembrane</keyword>
<keyword id="KW-1133">Transmembrane helix</keyword>
<organism>
    <name type="scientific">Oryza sativa subsp. japonica</name>
    <name type="common">Rice</name>
    <dbReference type="NCBI Taxonomy" id="39947"/>
    <lineage>
        <taxon>Eukaryota</taxon>
        <taxon>Viridiplantae</taxon>
        <taxon>Streptophyta</taxon>
        <taxon>Embryophyta</taxon>
        <taxon>Tracheophyta</taxon>
        <taxon>Spermatophyta</taxon>
        <taxon>Magnoliopsida</taxon>
        <taxon>Liliopsida</taxon>
        <taxon>Poales</taxon>
        <taxon>Poaceae</taxon>
        <taxon>BOP clade</taxon>
        <taxon>Oryzoideae</taxon>
        <taxon>Oryzeae</taxon>
        <taxon>Oryzinae</taxon>
        <taxon>Oryza</taxon>
        <taxon>Oryza sativa</taxon>
    </lineage>
</organism>
<comment type="function">
    <text evidence="6 7">Binds medium- and long-chain acyl-CoA esters with high affinity. Can interact in vitro with palmitoyl-CoA, linoleoyl-CoA and linolenoyl-CoA (PubMed:21128943). Binds phosphatidic acid (PA) and phosphatidylcholine (PC) in vitro. May play a role in the biosynthesis of phospholipids (PubMed:24738983).</text>
</comment>
<comment type="subcellular location">
    <subcellularLocation>
        <location evidence="10">Endoplasmic reticulum membrane</location>
        <topology evidence="2">Single-pass membrane protein</topology>
    </subcellularLocation>
</comment>
<comment type="tissue specificity">
    <text evidence="6">Highly expressed in leaves. Expressed at low levels in roots and seeds.</text>
</comment>
<comment type="induction">
    <text evidence="6">Induced by salt and drought stresses. Down-regulated by cold stress, wounding and infection with the rice blast fungus Magnaporthe oryzae.</text>
</comment>
<comment type="similarity">
    <text evidence="9">Belongs to the ACBP family.</text>
</comment>
<gene>
    <name evidence="8" type="primary">ACBP4</name>
    <name evidence="11" type="ordered locus">Os04g0681900</name>
    <name evidence="9" type="ordered locus">LOC_Os04g58550</name>
    <name evidence="13" type="ORF">OsJ_16661</name>
    <name evidence="12" type="ORF">OSJNBa0032F06.12</name>
</gene>
<feature type="chain" id="PRO_0000442034" description="Acyl-CoA-binding domain-containing protein 4">
    <location>
        <begin position="1"/>
        <end position="336"/>
    </location>
</feature>
<feature type="transmembrane region" description="Helical; Signal-anchor" evidence="2">
    <location>
        <begin position="12"/>
        <end position="32"/>
    </location>
</feature>
<feature type="domain" description="ACB" evidence="4">
    <location>
        <begin position="90"/>
        <end position="178"/>
    </location>
</feature>
<feature type="repeat" description="ANK 1" evidence="2">
    <location>
        <begin position="251"/>
        <end position="280"/>
    </location>
</feature>
<feature type="repeat" description="ANK 2" evidence="2">
    <location>
        <begin position="284"/>
        <end position="313"/>
    </location>
</feature>
<feature type="region of interest" description="Disordered" evidence="5">
    <location>
        <begin position="40"/>
        <end position="88"/>
    </location>
</feature>
<feature type="region of interest" description="Disordered" evidence="5">
    <location>
        <begin position="179"/>
        <end position="202"/>
    </location>
</feature>
<feature type="compositionally biased region" description="Low complexity" evidence="5">
    <location>
        <begin position="42"/>
        <end position="54"/>
    </location>
</feature>
<feature type="compositionally biased region" description="Acidic residues" evidence="5">
    <location>
        <begin position="78"/>
        <end position="88"/>
    </location>
</feature>
<feature type="binding site" evidence="1">
    <location>
        <begin position="120"/>
        <end position="124"/>
    </location>
    <ligand>
        <name>an acyl-CoA</name>
        <dbReference type="ChEBI" id="CHEBI:58342"/>
    </ligand>
</feature>
<feature type="binding site" evidence="1">
    <location>
        <position position="142"/>
    </location>
    <ligand>
        <name>an acyl-CoA</name>
        <dbReference type="ChEBI" id="CHEBI:58342"/>
    </ligand>
</feature>
<feature type="binding site" evidence="1">
    <location>
        <position position="146"/>
    </location>
    <ligand>
        <name>an acyl-CoA</name>
        <dbReference type="ChEBI" id="CHEBI:58342"/>
    </ligand>
</feature>
<feature type="binding site" evidence="1">
    <location>
        <position position="165"/>
    </location>
    <ligand>
        <name>an acyl-CoA</name>
        <dbReference type="ChEBI" id="CHEBI:58342"/>
    </ligand>
</feature>
<feature type="glycosylation site" description="N-linked (GlcNAc...) asparagine" evidence="3">
    <location>
        <position position="175"/>
    </location>
</feature>
<feature type="glycosylation site" description="N-linked (GlcNAc...) asparagine" evidence="3">
    <location>
        <position position="216"/>
    </location>
</feature>
<feature type="sequence conflict" description="In Ref. 1; CAE03429 and 2; BAF16206." evidence="9" ref="1 2">
    <original>S</original>
    <variation>F</variation>
    <location>
        <position position="46"/>
    </location>
</feature>
<feature type="sequence conflict" description="In Ref. 1; CAE03429 and 2; BAF16206." evidence="9" ref="1 2">
    <original>E</original>
    <variation>D</variation>
    <location>
        <position position="93"/>
    </location>
</feature>
<protein>
    <recommendedName>
        <fullName evidence="9">Acyl-CoA-binding domain-containing protein 4</fullName>
        <shortName evidence="8">Acyl-CoA binding protein 4</shortName>
        <shortName evidence="8">OsACBP4</shortName>
    </recommendedName>
</protein>
<dbReference type="EMBL" id="AL606641">
    <property type="protein sequence ID" value="CAE03429.1"/>
    <property type="molecule type" value="Genomic_DNA"/>
</dbReference>
<dbReference type="EMBL" id="AP008210">
    <property type="protein sequence ID" value="BAF16206.1"/>
    <property type="molecule type" value="Genomic_DNA"/>
</dbReference>
<dbReference type="EMBL" id="AP014960">
    <property type="protein sequence ID" value="BAS91681.1"/>
    <property type="molecule type" value="Genomic_DNA"/>
</dbReference>
<dbReference type="EMBL" id="CM000141">
    <property type="protein sequence ID" value="EAZ32450.1"/>
    <property type="molecule type" value="Genomic_DNA"/>
</dbReference>
<dbReference type="RefSeq" id="XP_015637218.1">
    <property type="nucleotide sequence ID" value="XM_015781732.1"/>
</dbReference>
<dbReference type="SMR" id="A3AYR1"/>
<dbReference type="FunCoup" id="A3AYR1">
    <property type="interactions" value="1383"/>
</dbReference>
<dbReference type="STRING" id="39947.A3AYR1"/>
<dbReference type="GlyCosmos" id="A3AYR1">
    <property type="glycosylation" value="2 sites, No reported glycans"/>
</dbReference>
<dbReference type="PaxDb" id="39947-A3AYR1"/>
<dbReference type="EnsemblPlants" id="Os04t0681900-02">
    <property type="protein sequence ID" value="Os04t0681900-02"/>
    <property type="gene ID" value="Os04g0681900"/>
</dbReference>
<dbReference type="Gramene" id="Os04t0681900-02">
    <property type="protein sequence ID" value="Os04t0681900-02"/>
    <property type="gene ID" value="Os04g0681900"/>
</dbReference>
<dbReference type="KEGG" id="dosa:Os04g0681900"/>
<dbReference type="eggNOG" id="KOG0817">
    <property type="taxonomic scope" value="Eukaryota"/>
</dbReference>
<dbReference type="HOGENOM" id="CLU_050309_0_0_1"/>
<dbReference type="InParanoid" id="A3AYR1"/>
<dbReference type="OMA" id="ARSKWQA"/>
<dbReference type="OrthoDB" id="71307at2759"/>
<dbReference type="Proteomes" id="UP000000763">
    <property type="component" value="Chromosome 4"/>
</dbReference>
<dbReference type="Proteomes" id="UP000007752">
    <property type="component" value="Chromosome 4"/>
</dbReference>
<dbReference type="Proteomes" id="UP000059680">
    <property type="component" value="Chromosome 4"/>
</dbReference>
<dbReference type="ExpressionAtlas" id="A3AYR1">
    <property type="expression patterns" value="baseline and differential"/>
</dbReference>
<dbReference type="GO" id="GO:0005789">
    <property type="term" value="C:endoplasmic reticulum membrane"/>
    <property type="evidence" value="ECO:0007669"/>
    <property type="project" value="UniProtKB-SubCell"/>
</dbReference>
<dbReference type="GO" id="GO:0000062">
    <property type="term" value="F:fatty-acyl-CoA binding"/>
    <property type="evidence" value="ECO:0000318"/>
    <property type="project" value="GO_Central"/>
</dbReference>
<dbReference type="Gene3D" id="1.20.80.10">
    <property type="match status" value="1"/>
</dbReference>
<dbReference type="Gene3D" id="1.25.40.20">
    <property type="entry name" value="Ankyrin repeat-containing domain"/>
    <property type="match status" value="2"/>
</dbReference>
<dbReference type="InterPro" id="IPR000582">
    <property type="entry name" value="Acyl-CoA-binding_protein"/>
</dbReference>
<dbReference type="InterPro" id="IPR035984">
    <property type="entry name" value="Acyl-CoA-binding_sf"/>
</dbReference>
<dbReference type="InterPro" id="IPR002110">
    <property type="entry name" value="Ankyrin_rpt"/>
</dbReference>
<dbReference type="InterPro" id="IPR036770">
    <property type="entry name" value="Ankyrin_rpt-contain_sf"/>
</dbReference>
<dbReference type="InterPro" id="IPR014352">
    <property type="entry name" value="FERM/acyl-CoA-bd_prot_sf"/>
</dbReference>
<dbReference type="PANTHER" id="PTHR24119">
    <property type="entry name" value="ACYL-COA-BINDING DOMAIN-CONTAINING PROTEIN 6"/>
    <property type="match status" value="1"/>
</dbReference>
<dbReference type="PANTHER" id="PTHR24119:SF0">
    <property type="entry name" value="ACYL-COA-BINDING DOMAIN-CONTAINING PROTEIN 6"/>
    <property type="match status" value="1"/>
</dbReference>
<dbReference type="Pfam" id="PF00887">
    <property type="entry name" value="ACBP"/>
    <property type="match status" value="1"/>
</dbReference>
<dbReference type="Pfam" id="PF12796">
    <property type="entry name" value="Ank_2"/>
    <property type="match status" value="1"/>
</dbReference>
<dbReference type="PRINTS" id="PR00689">
    <property type="entry name" value="ACOABINDINGP"/>
</dbReference>
<dbReference type="PRINTS" id="PR01415">
    <property type="entry name" value="ANKYRIN"/>
</dbReference>
<dbReference type="SMART" id="SM00248">
    <property type="entry name" value="ANK"/>
    <property type="match status" value="2"/>
</dbReference>
<dbReference type="SUPFAM" id="SSF47027">
    <property type="entry name" value="Acyl-CoA binding protein"/>
    <property type="match status" value="1"/>
</dbReference>
<dbReference type="SUPFAM" id="SSF48403">
    <property type="entry name" value="Ankyrin repeat"/>
    <property type="match status" value="1"/>
</dbReference>
<dbReference type="PROSITE" id="PS51228">
    <property type="entry name" value="ACB_2"/>
    <property type="match status" value="1"/>
</dbReference>
<dbReference type="PROSITE" id="PS50297">
    <property type="entry name" value="ANK_REP_REGION"/>
    <property type="match status" value="1"/>
</dbReference>
<dbReference type="PROSITE" id="PS50088">
    <property type="entry name" value="ANK_REPEAT"/>
    <property type="match status" value="2"/>
</dbReference>
<sequence length="336" mass="35901">MGGDWQELAQAAVIGLLFAFLVAKLISTVIAFKEDNLRITRSTPTSPSAADTPAAPAPPPASLDGGHGDTSDGSGSDSDSDWEGVESTELDEEFSAASAFVAASAASGTSVPEQAQLQLYGLYKIATEGPCTAPQPSALKLKARAKWNAWHKLGAMPTEEAMQKYITVVDELFPNWSMGSSTKRKDEDTTVSASSSKGPMGPVFSSLMYEEEDQGNDSELGDIHVSAREGAIDDIAKHLAAGVEVNMRDSEGRTPLHWAVDRGHLNSVEILVNANADVNAQDNEGQTALHYAVLCEREDIAELLVKHHADVQIKDEDGNTVRELCPSSWSFMNLAN</sequence>
<proteinExistence type="evidence at transcript level"/>